<protein>
    <recommendedName>
        <fullName evidence="1">GTPase Obg</fullName>
        <ecNumber evidence="1">3.6.5.-</ecNumber>
    </recommendedName>
    <alternativeName>
        <fullName evidence="1">GTP-binding protein Obg</fullName>
    </alternativeName>
</protein>
<comment type="function">
    <text evidence="1">An essential GTPase which binds GTP, GDP and possibly (p)ppGpp with moderate affinity, with high nucleotide exchange rates and a fairly low GTP hydrolysis rate. Plays a role in control of the cell cycle, stress response, ribosome biogenesis and in those bacteria that undergo differentiation, in morphogenesis control.</text>
</comment>
<comment type="cofactor">
    <cofactor evidence="1">
        <name>Mg(2+)</name>
        <dbReference type="ChEBI" id="CHEBI:18420"/>
    </cofactor>
</comment>
<comment type="subunit">
    <text evidence="1">Monomer.</text>
</comment>
<comment type="subcellular location">
    <subcellularLocation>
        <location evidence="1">Cytoplasm</location>
    </subcellularLocation>
</comment>
<comment type="similarity">
    <text evidence="1">Belongs to the TRAFAC class OBG-HflX-like GTPase superfamily. OBG GTPase family.</text>
</comment>
<gene>
    <name evidence="1" type="primary">obg</name>
    <name type="ordered locus">Psyr_0703</name>
</gene>
<proteinExistence type="inferred from homology"/>
<name>OBG_PSEU2</name>
<feature type="chain" id="PRO_0000386164" description="GTPase Obg">
    <location>
        <begin position="1"/>
        <end position="407"/>
    </location>
</feature>
<feature type="domain" description="Obg" evidence="2">
    <location>
        <begin position="1"/>
        <end position="159"/>
    </location>
</feature>
<feature type="domain" description="OBG-type G" evidence="1">
    <location>
        <begin position="160"/>
        <end position="333"/>
    </location>
</feature>
<feature type="region of interest" description="Disordered" evidence="3">
    <location>
        <begin position="127"/>
        <end position="149"/>
    </location>
</feature>
<feature type="region of interest" description="Disordered" evidence="3">
    <location>
        <begin position="376"/>
        <end position="407"/>
    </location>
</feature>
<feature type="compositionally biased region" description="Polar residues" evidence="3">
    <location>
        <begin position="129"/>
        <end position="143"/>
    </location>
</feature>
<feature type="compositionally biased region" description="Acidic residues" evidence="3">
    <location>
        <begin position="385"/>
        <end position="400"/>
    </location>
</feature>
<feature type="binding site" evidence="1">
    <location>
        <begin position="166"/>
        <end position="173"/>
    </location>
    <ligand>
        <name>GTP</name>
        <dbReference type="ChEBI" id="CHEBI:37565"/>
    </ligand>
</feature>
<feature type="binding site" evidence="1">
    <location>
        <position position="173"/>
    </location>
    <ligand>
        <name>Mg(2+)</name>
        <dbReference type="ChEBI" id="CHEBI:18420"/>
    </ligand>
</feature>
<feature type="binding site" evidence="1">
    <location>
        <begin position="191"/>
        <end position="195"/>
    </location>
    <ligand>
        <name>GTP</name>
        <dbReference type="ChEBI" id="CHEBI:37565"/>
    </ligand>
</feature>
<feature type="binding site" evidence="1">
    <location>
        <position position="193"/>
    </location>
    <ligand>
        <name>Mg(2+)</name>
        <dbReference type="ChEBI" id="CHEBI:18420"/>
    </ligand>
</feature>
<feature type="binding site" evidence="1">
    <location>
        <begin position="213"/>
        <end position="216"/>
    </location>
    <ligand>
        <name>GTP</name>
        <dbReference type="ChEBI" id="CHEBI:37565"/>
    </ligand>
</feature>
<feature type="binding site" evidence="1">
    <location>
        <begin position="283"/>
        <end position="286"/>
    </location>
    <ligand>
        <name>GTP</name>
        <dbReference type="ChEBI" id="CHEBI:37565"/>
    </ligand>
</feature>
<feature type="binding site" evidence="1">
    <location>
        <begin position="314"/>
        <end position="316"/>
    </location>
    <ligand>
        <name>GTP</name>
        <dbReference type="ChEBI" id="CHEBI:37565"/>
    </ligand>
</feature>
<sequence>MKFVDEVSIRVKAGDGGNGCMSFRREKFIENGGPNGGDGGDGGSIFMVADVNLNTLVDYRYTRHFDAERGSNGGSADCTGRKGEELVLRVPVGTTIIDATTQEIIGDLTKDGQRLMVAQGGWHGLGNTRFKSSTNRAPRQTTPGKPGDQRDLKLELKVLADVGLLGLPNAGKSTFIRSVSAAKPKVADYPFTTLVPNLGVVSVDRWKSFVVADIPGLIEGASDGAGLGIRFLKHLARTRLLLHLVDMAPLDESSAPDAAEVIVNELEKFSPSLAERDRWLVLNKCDQILEEEQEARKQEIVDRLEWTGPVYVISAIAKEGTEQLTRDIMRYLEERSQRIAEEPGYAEELAELDQRIEDEARAQLQALDDQRALRRSGVKSVHDIGDDDWDEEDVDDEDGPEIIYVRD</sequence>
<accession>Q4ZYK1</accession>
<keyword id="KW-0963">Cytoplasm</keyword>
<keyword id="KW-0342">GTP-binding</keyword>
<keyword id="KW-0378">Hydrolase</keyword>
<keyword id="KW-0460">Magnesium</keyword>
<keyword id="KW-0479">Metal-binding</keyword>
<keyword id="KW-0547">Nucleotide-binding</keyword>
<dbReference type="EC" id="3.6.5.-" evidence="1"/>
<dbReference type="EMBL" id="CP000075">
    <property type="protein sequence ID" value="AAY35771.1"/>
    <property type="molecule type" value="Genomic_DNA"/>
</dbReference>
<dbReference type="RefSeq" id="YP_233809.1">
    <property type="nucleotide sequence ID" value="NC_007005.1"/>
</dbReference>
<dbReference type="SMR" id="Q4ZYK1"/>
<dbReference type="STRING" id="205918.Psyr_0703"/>
<dbReference type="KEGG" id="psb:Psyr_0703"/>
<dbReference type="PATRIC" id="fig|205918.7.peg.729"/>
<dbReference type="eggNOG" id="COG0536">
    <property type="taxonomic scope" value="Bacteria"/>
</dbReference>
<dbReference type="HOGENOM" id="CLU_011747_2_0_6"/>
<dbReference type="OrthoDB" id="9807318at2"/>
<dbReference type="Proteomes" id="UP000000426">
    <property type="component" value="Chromosome"/>
</dbReference>
<dbReference type="GO" id="GO:0005737">
    <property type="term" value="C:cytoplasm"/>
    <property type="evidence" value="ECO:0007669"/>
    <property type="project" value="UniProtKB-SubCell"/>
</dbReference>
<dbReference type="GO" id="GO:0005525">
    <property type="term" value="F:GTP binding"/>
    <property type="evidence" value="ECO:0007669"/>
    <property type="project" value="UniProtKB-UniRule"/>
</dbReference>
<dbReference type="GO" id="GO:0003924">
    <property type="term" value="F:GTPase activity"/>
    <property type="evidence" value="ECO:0007669"/>
    <property type="project" value="UniProtKB-UniRule"/>
</dbReference>
<dbReference type="GO" id="GO:0000287">
    <property type="term" value="F:magnesium ion binding"/>
    <property type="evidence" value="ECO:0007669"/>
    <property type="project" value="InterPro"/>
</dbReference>
<dbReference type="GO" id="GO:0042254">
    <property type="term" value="P:ribosome biogenesis"/>
    <property type="evidence" value="ECO:0007669"/>
    <property type="project" value="UniProtKB-UniRule"/>
</dbReference>
<dbReference type="CDD" id="cd01898">
    <property type="entry name" value="Obg"/>
    <property type="match status" value="1"/>
</dbReference>
<dbReference type="FunFam" id="2.70.210.12:FF:000001">
    <property type="entry name" value="GTPase Obg"/>
    <property type="match status" value="1"/>
</dbReference>
<dbReference type="FunFam" id="3.40.50.300:FF:000185">
    <property type="entry name" value="GTPase Obg"/>
    <property type="match status" value="1"/>
</dbReference>
<dbReference type="Gene3D" id="2.70.210.12">
    <property type="entry name" value="GTP1/OBG domain"/>
    <property type="match status" value="1"/>
</dbReference>
<dbReference type="Gene3D" id="3.40.50.300">
    <property type="entry name" value="P-loop containing nucleotide triphosphate hydrolases"/>
    <property type="match status" value="1"/>
</dbReference>
<dbReference type="HAMAP" id="MF_01454">
    <property type="entry name" value="GTPase_Obg"/>
    <property type="match status" value="1"/>
</dbReference>
<dbReference type="InterPro" id="IPR031167">
    <property type="entry name" value="G_OBG"/>
</dbReference>
<dbReference type="InterPro" id="IPR006073">
    <property type="entry name" value="GTP-bd"/>
</dbReference>
<dbReference type="InterPro" id="IPR014100">
    <property type="entry name" value="GTP-bd_Obg/CgtA"/>
</dbReference>
<dbReference type="InterPro" id="IPR006074">
    <property type="entry name" value="GTP1-OBG_CS"/>
</dbReference>
<dbReference type="InterPro" id="IPR006169">
    <property type="entry name" value="GTP1_OBG_dom"/>
</dbReference>
<dbReference type="InterPro" id="IPR036726">
    <property type="entry name" value="GTP1_OBG_dom_sf"/>
</dbReference>
<dbReference type="InterPro" id="IPR045086">
    <property type="entry name" value="OBG_GTPase"/>
</dbReference>
<dbReference type="InterPro" id="IPR027417">
    <property type="entry name" value="P-loop_NTPase"/>
</dbReference>
<dbReference type="NCBIfam" id="TIGR02729">
    <property type="entry name" value="Obg_CgtA"/>
    <property type="match status" value="1"/>
</dbReference>
<dbReference type="NCBIfam" id="NF008955">
    <property type="entry name" value="PRK12297.1"/>
    <property type="match status" value="1"/>
</dbReference>
<dbReference type="NCBIfam" id="NF008956">
    <property type="entry name" value="PRK12299.1"/>
    <property type="match status" value="1"/>
</dbReference>
<dbReference type="PANTHER" id="PTHR11702">
    <property type="entry name" value="DEVELOPMENTALLY REGULATED GTP-BINDING PROTEIN-RELATED"/>
    <property type="match status" value="1"/>
</dbReference>
<dbReference type="PANTHER" id="PTHR11702:SF31">
    <property type="entry name" value="MITOCHONDRIAL RIBOSOME-ASSOCIATED GTPASE 2"/>
    <property type="match status" value="1"/>
</dbReference>
<dbReference type="Pfam" id="PF01018">
    <property type="entry name" value="GTP1_OBG"/>
    <property type="match status" value="1"/>
</dbReference>
<dbReference type="Pfam" id="PF01926">
    <property type="entry name" value="MMR_HSR1"/>
    <property type="match status" value="1"/>
</dbReference>
<dbReference type="PIRSF" id="PIRSF002401">
    <property type="entry name" value="GTP_bd_Obg/CgtA"/>
    <property type="match status" value="1"/>
</dbReference>
<dbReference type="PRINTS" id="PR00326">
    <property type="entry name" value="GTP1OBG"/>
</dbReference>
<dbReference type="SUPFAM" id="SSF82051">
    <property type="entry name" value="Obg GTP-binding protein N-terminal domain"/>
    <property type="match status" value="1"/>
</dbReference>
<dbReference type="SUPFAM" id="SSF52540">
    <property type="entry name" value="P-loop containing nucleoside triphosphate hydrolases"/>
    <property type="match status" value="1"/>
</dbReference>
<dbReference type="PROSITE" id="PS51710">
    <property type="entry name" value="G_OBG"/>
    <property type="match status" value="1"/>
</dbReference>
<dbReference type="PROSITE" id="PS00905">
    <property type="entry name" value="GTP1_OBG"/>
    <property type="match status" value="1"/>
</dbReference>
<dbReference type="PROSITE" id="PS51883">
    <property type="entry name" value="OBG"/>
    <property type="match status" value="1"/>
</dbReference>
<organism>
    <name type="scientific">Pseudomonas syringae pv. syringae (strain B728a)</name>
    <dbReference type="NCBI Taxonomy" id="205918"/>
    <lineage>
        <taxon>Bacteria</taxon>
        <taxon>Pseudomonadati</taxon>
        <taxon>Pseudomonadota</taxon>
        <taxon>Gammaproteobacteria</taxon>
        <taxon>Pseudomonadales</taxon>
        <taxon>Pseudomonadaceae</taxon>
        <taxon>Pseudomonas</taxon>
        <taxon>Pseudomonas syringae</taxon>
    </lineage>
</organism>
<reference key="1">
    <citation type="journal article" date="2005" name="Proc. Natl. Acad. Sci. U.S.A.">
        <title>Comparison of the complete genome sequences of Pseudomonas syringae pv. syringae B728a and pv. tomato DC3000.</title>
        <authorList>
            <person name="Feil H."/>
            <person name="Feil W.S."/>
            <person name="Chain P."/>
            <person name="Larimer F."/>
            <person name="Dibartolo G."/>
            <person name="Copeland A."/>
            <person name="Lykidis A."/>
            <person name="Trong S."/>
            <person name="Nolan M."/>
            <person name="Goltsman E."/>
            <person name="Thiel J."/>
            <person name="Malfatti S."/>
            <person name="Loper J.E."/>
            <person name="Lapidus A."/>
            <person name="Detter J.C."/>
            <person name="Land M."/>
            <person name="Richardson P.M."/>
            <person name="Kyrpides N.C."/>
            <person name="Ivanova N."/>
            <person name="Lindow S.E."/>
        </authorList>
    </citation>
    <scope>NUCLEOTIDE SEQUENCE [LARGE SCALE GENOMIC DNA]</scope>
    <source>
        <strain>B728a</strain>
    </source>
</reference>
<evidence type="ECO:0000255" key="1">
    <source>
        <dbReference type="HAMAP-Rule" id="MF_01454"/>
    </source>
</evidence>
<evidence type="ECO:0000255" key="2">
    <source>
        <dbReference type="PROSITE-ProRule" id="PRU01231"/>
    </source>
</evidence>
<evidence type="ECO:0000256" key="3">
    <source>
        <dbReference type="SAM" id="MobiDB-lite"/>
    </source>
</evidence>